<keyword id="KW-0903">Direct protein sequencing</keyword>
<protein>
    <recommendedName>
        <fullName>Pseudohemocyanin</fullName>
    </recommendedName>
</protein>
<reference evidence="5" key="1">
    <citation type="journal article" date="2007" name="Mar. Biol.">
        <title>Structural and functional heterogeneity of hemocyanin: intra- and inter-specific comparison in four species of portunid crabs (Crustacea: Portunidae).</title>
        <authorList>
            <person name="Giomi F."/>
            <person name="Raicevich S."/>
            <person name="Ferrarese A."/>
            <person name="Pranovi F."/>
            <person name="Di Muro P."/>
            <person name="Beltramin K."/>
        </authorList>
    </citation>
    <scope>PROTEIN SEQUENCE</scope>
    <scope>TISSUE SPECIFICITY</scope>
    <source>
        <tissue evidence="3">Hemolymph</tissue>
    </source>
</reference>
<organism>
    <name type="scientific">Liocarcinus marmoreus</name>
    <name type="common">Marbled swimming crab</name>
    <name type="synonym">Portunus marmoreus</name>
    <dbReference type="NCBI Taxonomy" id="368049"/>
    <lineage>
        <taxon>Eukaryota</taxon>
        <taxon>Metazoa</taxon>
        <taxon>Ecdysozoa</taxon>
        <taxon>Arthropoda</taxon>
        <taxon>Crustacea</taxon>
        <taxon>Multicrustacea</taxon>
        <taxon>Malacostraca</taxon>
        <taxon>Eumalacostraca</taxon>
        <taxon>Eucarida</taxon>
        <taxon>Decapoda</taxon>
        <taxon>Pleocyemata</taxon>
        <taxon>Brachyura</taxon>
        <taxon>Eubrachyura</taxon>
        <taxon>Portunoidea</taxon>
        <taxon>Polybiidae</taxon>
        <taxon>Liocarcinus</taxon>
    </lineage>
</organism>
<sequence>DEPDGVPTRQKQ</sequence>
<feature type="chain" id="PRO_0000223494" description="Pseudohemocyanin">
    <location>
        <begin position="1"/>
        <end position="12" status="greater than"/>
    </location>
</feature>
<feature type="non-terminal residue" evidence="4">
    <location>
        <position position="12"/>
    </location>
</feature>
<accession>P84769</accession>
<evidence type="ECO:0000250" key="1">
    <source>
        <dbReference type="UniProtKB" id="Q6KF81"/>
    </source>
</evidence>
<evidence type="ECO:0000250" key="2">
    <source>
        <dbReference type="UniProtKB" id="Q6KF82"/>
    </source>
</evidence>
<evidence type="ECO:0000269" key="3">
    <source ref="1"/>
</evidence>
<evidence type="ECO:0000303" key="4">
    <source ref="1"/>
</evidence>
<evidence type="ECO:0000305" key="5"/>
<proteinExistence type="evidence at protein level"/>
<dbReference type="GO" id="GO:0005615">
    <property type="term" value="C:extracellular space"/>
    <property type="evidence" value="ECO:0000314"/>
    <property type="project" value="UniProtKB"/>
</dbReference>
<name>PHCY_LIOMA</name>
<comment type="function">
    <text evidence="2">Does not function as a hemocyanin.</text>
</comment>
<comment type="subunit">
    <text evidence="1">Hexamer.</text>
</comment>
<comment type="tissue specificity">
    <text evidence="3">Hemolymph.</text>
</comment>
<comment type="similarity">
    <text evidence="5">Belongs to the tyrosinase family. Hemocyanin subfamily.</text>
</comment>